<proteinExistence type="inferred from homology"/>
<comment type="function">
    <text evidence="1">Catalyzes the phosphorylation of D-fructose 6-phosphate to fructose 1,6-bisphosphate by ATP, the first committing step of glycolysis.</text>
</comment>
<comment type="catalytic activity">
    <reaction evidence="1">
        <text>beta-D-fructose 6-phosphate + ATP = beta-D-fructose 1,6-bisphosphate + ADP + H(+)</text>
        <dbReference type="Rhea" id="RHEA:16109"/>
        <dbReference type="ChEBI" id="CHEBI:15378"/>
        <dbReference type="ChEBI" id="CHEBI:30616"/>
        <dbReference type="ChEBI" id="CHEBI:32966"/>
        <dbReference type="ChEBI" id="CHEBI:57634"/>
        <dbReference type="ChEBI" id="CHEBI:456216"/>
        <dbReference type="EC" id="2.7.1.11"/>
    </reaction>
</comment>
<comment type="cofactor">
    <cofactor evidence="1">
        <name>Mg(2+)</name>
        <dbReference type="ChEBI" id="CHEBI:18420"/>
    </cofactor>
</comment>
<comment type="activity regulation">
    <text evidence="1">Allosterically activated by ADP and other diphosphonucleosides, and allosterically inhibited by phosphoenolpyruvate.</text>
</comment>
<comment type="pathway">
    <text evidence="1">Carbohydrate degradation; glycolysis; D-glyceraldehyde 3-phosphate and glycerone phosphate from D-glucose: step 3/4.</text>
</comment>
<comment type="subunit">
    <text evidence="1">Homotetramer.</text>
</comment>
<comment type="subcellular location">
    <subcellularLocation>
        <location evidence="1">Cytoplasm</location>
    </subcellularLocation>
</comment>
<comment type="similarity">
    <text evidence="1">Belongs to the phosphofructokinase type A (PFKA) family. ATP-dependent PFK group I subfamily. Prokaryotic clade 'B1' sub-subfamily.</text>
</comment>
<name>PFKA_ENTCL</name>
<sequence>MIKKIGVLTSGGDAPGMNAAIRGVVRAALTEGLEVFGVYDGYLGLYEDRMVQLDRYSVSDMINRGGTFLGSARFPEFRDEHVREVAIENMKKRGLDALVVIGGDGSYMGAKRLTEMGFPCIGLPGTIDNDIKGTDYTIGFFTALGTVVEAIDRLRDTSSSHQRISIVEVMGRYCGDLTLAAAIAGGCEFIVVPEVEFSREDLVAEIKAGIAKGKKHAIVAITEHICDVDELAKYIEAETKRETRATVLGHIQRGGSPGPYDRILASRMGAYAIDLLLQGHGGRCVGIQNEKLVHHDIIDAIENMKRPFKGDWLDCAKKLY</sequence>
<accession>Q9Z6C3</accession>
<gene>
    <name evidence="1" type="primary">pfkA</name>
</gene>
<reference key="1">
    <citation type="journal article" date="1999" name="Appl. Environ. Microbiol.">
        <title>Role of pfkA and general carbohydrate catabolism in seed colonization by Enterobacter cloacae.</title>
        <authorList>
            <person name="Roberts D.P."/>
            <person name="Dery P.D."/>
            <person name="Yucel I."/>
            <person name="Buyer J."/>
            <person name="Holtman M.A."/>
            <person name="Kobayashi D.Y."/>
        </authorList>
    </citation>
    <scope>NUCLEOTIDE SEQUENCE [GENOMIC DNA]</scope>
    <source>
        <strain>A-11 / 501R3</strain>
    </source>
</reference>
<dbReference type="EC" id="2.7.1.11" evidence="1"/>
<dbReference type="EMBL" id="AF098509">
    <property type="protein sequence ID" value="AAD16179.1"/>
    <property type="molecule type" value="Genomic_DNA"/>
</dbReference>
<dbReference type="RefSeq" id="WP_023309696.1">
    <property type="nucleotide sequence ID" value="NZ_JAXRKW010000013.1"/>
</dbReference>
<dbReference type="SMR" id="Q9Z6C3"/>
<dbReference type="GeneID" id="93267627"/>
<dbReference type="eggNOG" id="COG0205">
    <property type="taxonomic scope" value="Bacteria"/>
</dbReference>
<dbReference type="UniPathway" id="UPA00109">
    <property type="reaction ID" value="UER00182"/>
</dbReference>
<dbReference type="GO" id="GO:0005945">
    <property type="term" value="C:6-phosphofructokinase complex"/>
    <property type="evidence" value="ECO:0007669"/>
    <property type="project" value="TreeGrafter"/>
</dbReference>
<dbReference type="GO" id="GO:0003872">
    <property type="term" value="F:6-phosphofructokinase activity"/>
    <property type="evidence" value="ECO:0007669"/>
    <property type="project" value="UniProtKB-UniRule"/>
</dbReference>
<dbReference type="GO" id="GO:0016208">
    <property type="term" value="F:AMP binding"/>
    <property type="evidence" value="ECO:0007669"/>
    <property type="project" value="TreeGrafter"/>
</dbReference>
<dbReference type="GO" id="GO:0005524">
    <property type="term" value="F:ATP binding"/>
    <property type="evidence" value="ECO:0007669"/>
    <property type="project" value="UniProtKB-KW"/>
</dbReference>
<dbReference type="GO" id="GO:0070095">
    <property type="term" value="F:fructose-6-phosphate binding"/>
    <property type="evidence" value="ECO:0007669"/>
    <property type="project" value="TreeGrafter"/>
</dbReference>
<dbReference type="GO" id="GO:0042802">
    <property type="term" value="F:identical protein binding"/>
    <property type="evidence" value="ECO:0007669"/>
    <property type="project" value="TreeGrafter"/>
</dbReference>
<dbReference type="GO" id="GO:0046872">
    <property type="term" value="F:metal ion binding"/>
    <property type="evidence" value="ECO:0007669"/>
    <property type="project" value="UniProtKB-KW"/>
</dbReference>
<dbReference type="GO" id="GO:0048029">
    <property type="term" value="F:monosaccharide binding"/>
    <property type="evidence" value="ECO:0007669"/>
    <property type="project" value="TreeGrafter"/>
</dbReference>
<dbReference type="GO" id="GO:0061621">
    <property type="term" value="P:canonical glycolysis"/>
    <property type="evidence" value="ECO:0007669"/>
    <property type="project" value="TreeGrafter"/>
</dbReference>
<dbReference type="GO" id="GO:0030388">
    <property type="term" value="P:fructose 1,6-bisphosphate metabolic process"/>
    <property type="evidence" value="ECO:0007669"/>
    <property type="project" value="TreeGrafter"/>
</dbReference>
<dbReference type="GO" id="GO:0006002">
    <property type="term" value="P:fructose 6-phosphate metabolic process"/>
    <property type="evidence" value="ECO:0007669"/>
    <property type="project" value="InterPro"/>
</dbReference>
<dbReference type="CDD" id="cd00763">
    <property type="entry name" value="Bacterial_PFK"/>
    <property type="match status" value="1"/>
</dbReference>
<dbReference type="FunFam" id="3.40.50.450:FF:000001">
    <property type="entry name" value="ATP-dependent 6-phosphofructokinase"/>
    <property type="match status" value="1"/>
</dbReference>
<dbReference type="FunFam" id="3.40.50.460:FF:000002">
    <property type="entry name" value="ATP-dependent 6-phosphofructokinase"/>
    <property type="match status" value="1"/>
</dbReference>
<dbReference type="Gene3D" id="3.40.50.450">
    <property type="match status" value="1"/>
</dbReference>
<dbReference type="Gene3D" id="3.40.50.460">
    <property type="entry name" value="Phosphofructokinase domain"/>
    <property type="match status" value="1"/>
</dbReference>
<dbReference type="HAMAP" id="MF_00339">
    <property type="entry name" value="Phosphofructokinase_I_B1"/>
    <property type="match status" value="1"/>
</dbReference>
<dbReference type="InterPro" id="IPR022953">
    <property type="entry name" value="ATP_PFK"/>
</dbReference>
<dbReference type="InterPro" id="IPR012003">
    <property type="entry name" value="ATP_PFK_prok-type"/>
</dbReference>
<dbReference type="InterPro" id="IPR012828">
    <property type="entry name" value="PFKA_ATP_prok"/>
</dbReference>
<dbReference type="InterPro" id="IPR015912">
    <property type="entry name" value="Phosphofructokinase_CS"/>
</dbReference>
<dbReference type="InterPro" id="IPR000023">
    <property type="entry name" value="Phosphofructokinase_dom"/>
</dbReference>
<dbReference type="InterPro" id="IPR035966">
    <property type="entry name" value="PKF_sf"/>
</dbReference>
<dbReference type="NCBIfam" id="TIGR02482">
    <property type="entry name" value="PFKA_ATP"/>
    <property type="match status" value="1"/>
</dbReference>
<dbReference type="NCBIfam" id="NF002872">
    <property type="entry name" value="PRK03202.1"/>
    <property type="match status" value="1"/>
</dbReference>
<dbReference type="PANTHER" id="PTHR13697:SF4">
    <property type="entry name" value="ATP-DEPENDENT 6-PHOSPHOFRUCTOKINASE"/>
    <property type="match status" value="1"/>
</dbReference>
<dbReference type="PANTHER" id="PTHR13697">
    <property type="entry name" value="PHOSPHOFRUCTOKINASE"/>
    <property type="match status" value="1"/>
</dbReference>
<dbReference type="Pfam" id="PF00365">
    <property type="entry name" value="PFK"/>
    <property type="match status" value="1"/>
</dbReference>
<dbReference type="PIRSF" id="PIRSF000532">
    <property type="entry name" value="ATP_PFK_prok"/>
    <property type="match status" value="1"/>
</dbReference>
<dbReference type="PRINTS" id="PR00476">
    <property type="entry name" value="PHFRCTKINASE"/>
</dbReference>
<dbReference type="SUPFAM" id="SSF53784">
    <property type="entry name" value="Phosphofructokinase"/>
    <property type="match status" value="1"/>
</dbReference>
<dbReference type="PROSITE" id="PS00433">
    <property type="entry name" value="PHOSPHOFRUCTOKINASE"/>
    <property type="match status" value="1"/>
</dbReference>
<protein>
    <recommendedName>
        <fullName evidence="1">ATP-dependent 6-phosphofructokinase</fullName>
        <shortName evidence="1">ATP-PFK</shortName>
        <shortName evidence="1">Phosphofructokinase</shortName>
        <ecNumber evidence="1">2.7.1.11</ecNumber>
    </recommendedName>
    <alternativeName>
        <fullName evidence="1">Phosphohexokinase</fullName>
    </alternativeName>
</protein>
<keyword id="KW-0021">Allosteric enzyme</keyword>
<keyword id="KW-0067">ATP-binding</keyword>
<keyword id="KW-0963">Cytoplasm</keyword>
<keyword id="KW-0324">Glycolysis</keyword>
<keyword id="KW-0418">Kinase</keyword>
<keyword id="KW-0460">Magnesium</keyword>
<keyword id="KW-0479">Metal-binding</keyword>
<keyword id="KW-0547">Nucleotide-binding</keyword>
<keyword id="KW-0808">Transferase</keyword>
<feature type="chain" id="PRO_0000111953" description="ATP-dependent 6-phosphofructokinase">
    <location>
        <begin position="1"/>
        <end position="320"/>
    </location>
</feature>
<feature type="active site" description="Proton acceptor" evidence="1">
    <location>
        <position position="128"/>
    </location>
</feature>
<feature type="binding site" evidence="1">
    <location>
        <position position="12"/>
    </location>
    <ligand>
        <name>ATP</name>
        <dbReference type="ChEBI" id="CHEBI:30616"/>
    </ligand>
</feature>
<feature type="binding site" evidence="1">
    <location>
        <begin position="22"/>
        <end position="26"/>
    </location>
    <ligand>
        <name>ADP</name>
        <dbReference type="ChEBI" id="CHEBI:456216"/>
        <note>allosteric activator; ligand shared between dimeric partners</note>
    </ligand>
</feature>
<feature type="binding site" evidence="1">
    <location>
        <begin position="55"/>
        <end position="60"/>
    </location>
    <ligand>
        <name>ADP</name>
        <dbReference type="ChEBI" id="CHEBI:456216"/>
        <note>allosteric activator; ligand shared between dimeric partners</note>
    </ligand>
</feature>
<feature type="binding site" evidence="1">
    <location>
        <begin position="73"/>
        <end position="74"/>
    </location>
    <ligand>
        <name>ATP</name>
        <dbReference type="ChEBI" id="CHEBI:30616"/>
    </ligand>
</feature>
<feature type="binding site" evidence="1">
    <location>
        <begin position="103"/>
        <end position="106"/>
    </location>
    <ligand>
        <name>ATP</name>
        <dbReference type="ChEBI" id="CHEBI:30616"/>
    </ligand>
</feature>
<feature type="binding site" evidence="1">
    <location>
        <position position="104"/>
    </location>
    <ligand>
        <name>Mg(2+)</name>
        <dbReference type="ChEBI" id="CHEBI:18420"/>
        <note>catalytic</note>
    </ligand>
</feature>
<feature type="binding site" description="in other chain" evidence="1">
    <location>
        <begin position="126"/>
        <end position="128"/>
    </location>
    <ligand>
        <name>substrate</name>
        <note>ligand shared between dimeric partners</note>
    </ligand>
</feature>
<feature type="binding site" description="in other chain" evidence="1">
    <location>
        <position position="155"/>
    </location>
    <ligand>
        <name>ADP</name>
        <dbReference type="ChEBI" id="CHEBI:456216"/>
        <note>allosteric activator; ligand shared between dimeric partners</note>
    </ligand>
</feature>
<feature type="binding site" evidence="1">
    <location>
        <position position="163"/>
    </location>
    <ligand>
        <name>substrate</name>
        <note>ligand shared between dimeric partners</note>
    </ligand>
</feature>
<feature type="binding site" description="in other chain" evidence="1">
    <location>
        <begin position="170"/>
        <end position="172"/>
    </location>
    <ligand>
        <name>substrate</name>
        <note>ligand shared between dimeric partners</note>
    </ligand>
</feature>
<feature type="binding site" description="in other chain" evidence="1">
    <location>
        <begin position="186"/>
        <end position="188"/>
    </location>
    <ligand>
        <name>ADP</name>
        <dbReference type="ChEBI" id="CHEBI:456216"/>
        <note>allosteric activator; ligand shared between dimeric partners</note>
    </ligand>
</feature>
<feature type="binding site" description="in other chain" evidence="1">
    <location>
        <position position="212"/>
    </location>
    <ligand>
        <name>ADP</name>
        <dbReference type="ChEBI" id="CHEBI:456216"/>
        <note>allosteric activator; ligand shared between dimeric partners</note>
    </ligand>
</feature>
<feature type="binding site" description="in other chain" evidence="1">
    <location>
        <begin position="214"/>
        <end position="216"/>
    </location>
    <ligand>
        <name>ADP</name>
        <dbReference type="ChEBI" id="CHEBI:456216"/>
        <note>allosteric activator; ligand shared between dimeric partners</note>
    </ligand>
</feature>
<feature type="binding site" description="in other chain" evidence="1">
    <location>
        <position position="223"/>
    </location>
    <ligand>
        <name>substrate</name>
        <note>ligand shared between dimeric partners</note>
    </ligand>
</feature>
<feature type="binding site" evidence="1">
    <location>
        <position position="244"/>
    </location>
    <ligand>
        <name>substrate</name>
        <note>ligand shared between dimeric partners</note>
    </ligand>
</feature>
<feature type="binding site" description="in other chain" evidence="1">
    <location>
        <begin position="250"/>
        <end position="253"/>
    </location>
    <ligand>
        <name>substrate</name>
        <note>ligand shared between dimeric partners</note>
    </ligand>
</feature>
<evidence type="ECO:0000255" key="1">
    <source>
        <dbReference type="HAMAP-Rule" id="MF_00339"/>
    </source>
</evidence>
<organism>
    <name type="scientific">Enterobacter cloacae</name>
    <dbReference type="NCBI Taxonomy" id="550"/>
    <lineage>
        <taxon>Bacteria</taxon>
        <taxon>Pseudomonadati</taxon>
        <taxon>Pseudomonadota</taxon>
        <taxon>Gammaproteobacteria</taxon>
        <taxon>Enterobacterales</taxon>
        <taxon>Enterobacteriaceae</taxon>
        <taxon>Enterobacter</taxon>
        <taxon>Enterobacter cloacae complex</taxon>
    </lineage>
</organism>